<organism>
    <name type="scientific">Chiroderma trinitatum</name>
    <name type="common">Little big-eyed bat</name>
    <dbReference type="NCBI Taxonomy" id="27647"/>
    <lineage>
        <taxon>Eukaryota</taxon>
        <taxon>Metazoa</taxon>
        <taxon>Chordata</taxon>
        <taxon>Craniata</taxon>
        <taxon>Vertebrata</taxon>
        <taxon>Euteleostomi</taxon>
        <taxon>Mammalia</taxon>
        <taxon>Eutheria</taxon>
        <taxon>Laurasiatheria</taxon>
        <taxon>Chiroptera</taxon>
        <taxon>Yangochiroptera</taxon>
        <taxon>Phyllostomidae</taxon>
        <taxon>Stenodermatinae</taxon>
        <taxon>Chiroderma</taxon>
    </lineage>
</organism>
<accession>Q34260</accession>
<accession>Q28348</accession>
<reference key="1">
    <citation type="journal article" date="1993" name="Mol. Biol. Evol.">
        <title>Molecular phylogenetics of Stenodermatini bat genera: congruence of data from nuclear and mitochondrial DNA.</title>
        <authorList>
            <person name="den Bussche R.A."/>
            <person name="Baker R.J."/>
            <person name="Wichman H.A."/>
            <person name="Hamilton M.J."/>
        </authorList>
    </citation>
    <scope>NUCLEOTIDE SEQUENCE [GENOMIC DNA]</scope>
    <source>
        <strain>Isolate TK 25211</strain>
        <tissue>Muscle</tissue>
    </source>
</reference>
<reference key="2">
    <citation type="journal article" date="1994" name="J. Mammal.">
        <title>Systematic relationships within Chiroderma (Chiroptera: Phyllostomidae) based on cytochrome b sequence variation.</title>
        <authorList>
            <person name="Baker R.J."/>
            <person name="Taddei V.A."/>
            <person name="Hudgeons J.L."/>
            <person name="den Bussche R.A."/>
        </authorList>
    </citation>
    <scope>NUCLEOTIDE SEQUENCE [GENOMIC DNA] OF 1-29</scope>
    <source>
        <strain>Isolate TK 25211</strain>
        <tissue>Liver</tissue>
    </source>
</reference>
<feature type="chain" id="PRO_0000060780" description="Cytochrome b">
    <location>
        <begin position="1"/>
        <end position="134" status="greater than"/>
    </location>
</feature>
<feature type="transmembrane region" description="Helical" evidence="2">
    <location>
        <begin position="33"/>
        <end position="53"/>
    </location>
</feature>
<feature type="transmembrane region" description="Helical" evidence="2">
    <location>
        <begin position="77"/>
        <end position="98"/>
    </location>
</feature>
<feature type="transmembrane region" description="Helical" evidence="2">
    <location>
        <begin position="113"/>
        <end position="133"/>
    </location>
</feature>
<feature type="binding site" description="axial binding residue" evidence="2">
    <location>
        <position position="83"/>
    </location>
    <ligand>
        <name>heme b</name>
        <dbReference type="ChEBI" id="CHEBI:60344"/>
        <label>b562</label>
    </ligand>
    <ligandPart>
        <name>Fe</name>
        <dbReference type="ChEBI" id="CHEBI:18248"/>
    </ligandPart>
</feature>
<feature type="binding site" description="axial binding residue" evidence="2">
    <location>
        <position position="97"/>
    </location>
    <ligand>
        <name>heme b</name>
        <dbReference type="ChEBI" id="CHEBI:60344"/>
        <label>b566</label>
    </ligand>
    <ligandPart>
        <name>Fe</name>
        <dbReference type="ChEBI" id="CHEBI:18248"/>
    </ligandPart>
</feature>
<feature type="non-terminal residue">
    <location>
        <position position="134"/>
    </location>
</feature>
<protein>
    <recommendedName>
        <fullName>Cytochrome b</fullName>
    </recommendedName>
    <alternativeName>
        <fullName>Complex III subunit 3</fullName>
    </alternativeName>
    <alternativeName>
        <fullName>Complex III subunit III</fullName>
    </alternativeName>
    <alternativeName>
        <fullName>Cytochrome b-c1 complex subunit 3</fullName>
    </alternativeName>
    <alternativeName>
        <fullName>Ubiquinol-cytochrome-c reductase complex cytochrome b subunit</fullName>
    </alternativeName>
</protein>
<gene>
    <name type="primary">MT-CYB</name>
    <name type="synonym">COB</name>
    <name type="synonym">CYTB</name>
    <name type="synonym">MTCYB</name>
</gene>
<dbReference type="EMBL" id="L19508">
    <property type="protein sequence ID" value="AAA31676.1"/>
    <property type="molecule type" value="Genomic_DNA"/>
</dbReference>
<dbReference type="EMBL" id="L28942">
    <property type="protein sequence ID" value="AAA30822.1"/>
    <property type="molecule type" value="Genomic_DNA"/>
</dbReference>
<dbReference type="PIR" id="I46091">
    <property type="entry name" value="I46091"/>
</dbReference>
<dbReference type="SMR" id="Q34260"/>
<dbReference type="GO" id="GO:0005743">
    <property type="term" value="C:mitochondrial inner membrane"/>
    <property type="evidence" value="ECO:0007669"/>
    <property type="project" value="UniProtKB-SubCell"/>
</dbReference>
<dbReference type="GO" id="GO:0046872">
    <property type="term" value="F:metal ion binding"/>
    <property type="evidence" value="ECO:0007669"/>
    <property type="project" value="UniProtKB-KW"/>
</dbReference>
<dbReference type="GO" id="GO:0008121">
    <property type="term" value="F:ubiquinol-cytochrome-c reductase activity"/>
    <property type="evidence" value="ECO:0007669"/>
    <property type="project" value="TreeGrafter"/>
</dbReference>
<dbReference type="GO" id="GO:0006122">
    <property type="term" value="P:mitochondrial electron transport, ubiquinol to cytochrome c"/>
    <property type="evidence" value="ECO:0007669"/>
    <property type="project" value="TreeGrafter"/>
</dbReference>
<dbReference type="CDD" id="cd00284">
    <property type="entry name" value="Cytochrome_b_N"/>
    <property type="match status" value="1"/>
</dbReference>
<dbReference type="Gene3D" id="1.20.810.10">
    <property type="entry name" value="Cytochrome Bc1 Complex, Chain C"/>
    <property type="match status" value="1"/>
</dbReference>
<dbReference type="InterPro" id="IPR005797">
    <property type="entry name" value="Cyt_b/b6_N"/>
</dbReference>
<dbReference type="InterPro" id="IPR027387">
    <property type="entry name" value="Cytb/b6-like_sf"/>
</dbReference>
<dbReference type="InterPro" id="IPR048259">
    <property type="entry name" value="Cytochrome_b_N_euk/bac"/>
</dbReference>
<dbReference type="InterPro" id="IPR016174">
    <property type="entry name" value="Di-haem_cyt_TM"/>
</dbReference>
<dbReference type="PANTHER" id="PTHR19271">
    <property type="entry name" value="CYTOCHROME B"/>
    <property type="match status" value="1"/>
</dbReference>
<dbReference type="PANTHER" id="PTHR19271:SF16">
    <property type="entry name" value="CYTOCHROME B"/>
    <property type="match status" value="1"/>
</dbReference>
<dbReference type="Pfam" id="PF00033">
    <property type="entry name" value="Cytochrome_B"/>
    <property type="match status" value="1"/>
</dbReference>
<dbReference type="SUPFAM" id="SSF81342">
    <property type="entry name" value="Transmembrane di-heme cytochromes"/>
    <property type="match status" value="1"/>
</dbReference>
<dbReference type="PROSITE" id="PS51002">
    <property type="entry name" value="CYTB_NTER"/>
    <property type="match status" value="1"/>
</dbReference>
<comment type="function">
    <text evidence="2">Component of the ubiquinol-cytochrome c reductase complex (complex III or cytochrome b-c1 complex) that is part of the mitochondrial respiratory chain. The b-c1 complex mediates electron transfer from ubiquinol to cytochrome c. Contributes to the generation of a proton gradient across the mitochondrial membrane that is then used for ATP synthesis.</text>
</comment>
<comment type="cofactor">
    <cofactor evidence="2">
        <name>heme b</name>
        <dbReference type="ChEBI" id="CHEBI:60344"/>
    </cofactor>
    <text evidence="2">Binds 2 heme b groups non-covalently.</text>
</comment>
<comment type="subunit">
    <text evidence="2">The cytochrome bc1 complex contains 11 subunits: 3 respiratory subunits (MT-CYB, CYC1 and UQCRFS1), 2 core proteins (UQCRC1 and UQCRC2) and 6 low-molecular weight proteins (UQCRH/QCR6, UQCRB/QCR7, UQCRQ/QCR8, UQCR10/QCR9, UQCR11/QCR10 and a cleavage product of UQCRFS1). This cytochrome bc1 complex then forms a dimer.</text>
</comment>
<comment type="subcellular location">
    <subcellularLocation>
        <location evidence="2">Mitochondrion inner membrane</location>
        <topology evidence="2">Multi-pass membrane protein</topology>
    </subcellularLocation>
</comment>
<comment type="miscellaneous">
    <text evidence="1">Heme 1 (or BL or b562) is low-potential and absorbs at about 562 nm, and heme 2 (or BH or b566) is high-potential and absorbs at about 566 nm.</text>
</comment>
<comment type="similarity">
    <text evidence="3">Belongs to the cytochrome b family.</text>
</comment>
<comment type="caution">
    <text evidence="2">The full-length protein contains only eight transmembrane helices, not nine as predicted by bioinformatics tools.</text>
</comment>
<evidence type="ECO:0000250" key="1"/>
<evidence type="ECO:0000250" key="2">
    <source>
        <dbReference type="UniProtKB" id="P00157"/>
    </source>
</evidence>
<evidence type="ECO:0000255" key="3">
    <source>
        <dbReference type="PROSITE-ProRule" id="PRU00968"/>
    </source>
</evidence>
<geneLocation type="mitochondrion"/>
<proteinExistence type="inferred from homology"/>
<keyword id="KW-0249">Electron transport</keyword>
<keyword id="KW-0349">Heme</keyword>
<keyword id="KW-0408">Iron</keyword>
<keyword id="KW-0472">Membrane</keyword>
<keyword id="KW-0479">Metal-binding</keyword>
<keyword id="KW-0496">Mitochondrion</keyword>
<keyword id="KW-0999">Mitochondrion inner membrane</keyword>
<keyword id="KW-0679">Respiratory chain</keyword>
<keyword id="KW-0812">Transmembrane</keyword>
<keyword id="KW-1133">Transmembrane helix</keyword>
<keyword id="KW-0813">Transport</keyword>
<keyword id="KW-0830">Ubiquinone</keyword>
<sequence length="134" mass="15016">MTNIRKTHPLLKIINSSFVDLPAPSSLSSWWNFGSLLGVCLAVQILTGLFLAMHYTSDTATAFNSVTHICRDVNYGWLLRYLHANGASMFFICLYLHVGRGLYYGSYTYSETWNVGILLLFAVMATAFMGYVLP</sequence>
<name>CYB_CHITR</name>